<name>PKS1_METBS</name>
<accession>A0A0B4ESU9</accession>
<keyword id="KW-0511">Multifunctional enzyme</keyword>
<keyword id="KW-0596">Phosphopantetheine</keyword>
<keyword id="KW-0597">Phosphoprotein</keyword>
<keyword id="KW-0677">Repeat</keyword>
<keyword id="KW-0808">Transferase</keyword>
<evidence type="ECO:0000250" key="1">
    <source>
        <dbReference type="UniProtKB" id="E9F646"/>
    </source>
</evidence>
<evidence type="ECO:0000250" key="2">
    <source>
        <dbReference type="UniProtKB" id="Q03149"/>
    </source>
</evidence>
<evidence type="ECO:0000255" key="3"/>
<evidence type="ECO:0000255" key="4">
    <source>
        <dbReference type="PROSITE-ProRule" id="PRU00258"/>
    </source>
</evidence>
<evidence type="ECO:0000255" key="5">
    <source>
        <dbReference type="PROSITE-ProRule" id="PRU01348"/>
    </source>
</evidence>
<evidence type="ECO:0000255" key="6">
    <source>
        <dbReference type="PROSITE-ProRule" id="PRU01363"/>
    </source>
</evidence>
<evidence type="ECO:0000255" key="7">
    <source>
        <dbReference type="PROSITE-ProRule" id="PRU10022"/>
    </source>
</evidence>
<evidence type="ECO:0000256" key="8">
    <source>
        <dbReference type="SAM" id="MobiDB-lite"/>
    </source>
</evidence>
<evidence type="ECO:0000269" key="9">
    <source>
    </source>
</evidence>
<evidence type="ECO:0000303" key="10">
    <source>
    </source>
</evidence>
<evidence type="ECO:0000305" key="11">
    <source>
    </source>
</evidence>
<gene>
    <name evidence="10" type="primary">Pks1</name>
    <name type="ORF">MBR_10250</name>
</gene>
<organism>
    <name type="scientific">Metarhizium brunneum (strain ARSEF 3297)</name>
    <dbReference type="NCBI Taxonomy" id="1276141"/>
    <lineage>
        <taxon>Eukaryota</taxon>
        <taxon>Fungi</taxon>
        <taxon>Dikarya</taxon>
        <taxon>Ascomycota</taxon>
        <taxon>Pezizomycotina</taxon>
        <taxon>Sordariomycetes</taxon>
        <taxon>Hypocreomycetidae</taxon>
        <taxon>Hypocreales</taxon>
        <taxon>Clavicipitaceae</taxon>
        <taxon>Metarhizium</taxon>
    </lineage>
</organism>
<reference key="1">
    <citation type="journal article" date="2014" name="Proc. Natl. Acad. Sci. U.S.A.">
        <title>Trajectory and genomic determinants of fungal-pathogen speciation and host adaptation.</title>
        <authorList>
            <person name="Hu X."/>
            <person name="Xiao G."/>
            <person name="Zheng P."/>
            <person name="Shang Y."/>
            <person name="Su Y."/>
            <person name="Zhang X."/>
            <person name="Liu X."/>
            <person name="Zhan S."/>
            <person name="St Leger R.J."/>
            <person name="Wang C."/>
        </authorList>
    </citation>
    <scope>NUCLEOTIDE SEQUENCE [LARGE SCALE GENOMIC DNA]</scope>
    <source>
        <strain>ARSEF 3297</strain>
    </source>
</reference>
<reference key="2">
    <citation type="journal article" date="2018" name="PLoS Genet.">
        <title>Duplication of a Pks gene cluster and subsequent functional diversification facilitate environmental adaptation in Metarhizium species.</title>
        <authorList>
            <person name="Zeng G."/>
            <person name="Zhang P."/>
            <person name="Zhang Q."/>
            <person name="Zhao H."/>
            <person name="Li Z."/>
            <person name="Zhang X."/>
            <person name="Wang C."/>
            <person name="Yin W.B."/>
            <person name="Fang W."/>
        </authorList>
    </citation>
    <scope>IDENTIFICATION</scope>
    <scope>DISRUPTION PHENOTYPE</scope>
    <scope>FUNCTION</scope>
    <scope>CATALYTIC ACTIVITY</scope>
    <scope>INDUCTION</scope>
    <scope>DOMAIN</scope>
</reference>
<dbReference type="EC" id="2.3.1.-" evidence="9"/>
<dbReference type="EMBL" id="AZNG01000033">
    <property type="protein sequence ID" value="KID61218.1"/>
    <property type="molecule type" value="Genomic_DNA"/>
</dbReference>
<dbReference type="RefSeq" id="XP_014539689.1">
    <property type="nucleotide sequence ID" value="XM_014684203.1"/>
</dbReference>
<dbReference type="SMR" id="A0A0B4ESU9"/>
<dbReference type="ESTHER" id="metaf-pks1">
    <property type="family name" value="Thioesterase"/>
</dbReference>
<dbReference type="GeneID" id="26247520"/>
<dbReference type="KEGG" id="mbrn:26247520"/>
<dbReference type="HOGENOM" id="CLU_000022_6_0_1"/>
<dbReference type="OrthoDB" id="4677at5529"/>
<dbReference type="GO" id="GO:0004315">
    <property type="term" value="F:3-oxoacyl-[acyl-carrier-protein] synthase activity"/>
    <property type="evidence" value="ECO:0007669"/>
    <property type="project" value="InterPro"/>
</dbReference>
<dbReference type="GO" id="GO:0004312">
    <property type="term" value="F:fatty acid synthase activity"/>
    <property type="evidence" value="ECO:0007669"/>
    <property type="project" value="TreeGrafter"/>
</dbReference>
<dbReference type="GO" id="GO:0031177">
    <property type="term" value="F:phosphopantetheine binding"/>
    <property type="evidence" value="ECO:0007669"/>
    <property type="project" value="InterPro"/>
</dbReference>
<dbReference type="GO" id="GO:0006633">
    <property type="term" value="P:fatty acid biosynthetic process"/>
    <property type="evidence" value="ECO:0007669"/>
    <property type="project" value="InterPro"/>
</dbReference>
<dbReference type="GO" id="GO:0046189">
    <property type="term" value="P:phenol-containing compound biosynthetic process"/>
    <property type="evidence" value="ECO:0007669"/>
    <property type="project" value="UniProtKB-ARBA"/>
</dbReference>
<dbReference type="GO" id="GO:0030639">
    <property type="term" value="P:polyketide biosynthetic process"/>
    <property type="evidence" value="ECO:0007669"/>
    <property type="project" value="UniProtKB-ARBA"/>
</dbReference>
<dbReference type="GO" id="GO:0009403">
    <property type="term" value="P:toxin biosynthetic process"/>
    <property type="evidence" value="ECO:0007669"/>
    <property type="project" value="UniProtKB-ARBA"/>
</dbReference>
<dbReference type="CDD" id="cd00833">
    <property type="entry name" value="PKS"/>
    <property type="match status" value="1"/>
</dbReference>
<dbReference type="FunFam" id="3.40.366.10:FF:000002">
    <property type="entry name" value="Probable polyketide synthase 2"/>
    <property type="match status" value="1"/>
</dbReference>
<dbReference type="FunFam" id="3.10.129.110:FF:000001">
    <property type="entry name" value="Sterigmatocystin biosynthesis polyketide synthase"/>
    <property type="match status" value="1"/>
</dbReference>
<dbReference type="FunFam" id="3.40.47.10:FF:000031">
    <property type="entry name" value="Sterigmatocystin biosynthesis polyketide synthase"/>
    <property type="match status" value="1"/>
</dbReference>
<dbReference type="FunFam" id="3.40.50.1820:FF:000116">
    <property type="entry name" value="Sterigmatocystin biosynthesis polyketide synthase"/>
    <property type="match status" value="1"/>
</dbReference>
<dbReference type="Gene3D" id="3.30.70.3290">
    <property type="match status" value="1"/>
</dbReference>
<dbReference type="Gene3D" id="3.40.47.10">
    <property type="match status" value="1"/>
</dbReference>
<dbReference type="Gene3D" id="1.10.1200.10">
    <property type="entry name" value="ACP-like"/>
    <property type="match status" value="2"/>
</dbReference>
<dbReference type="Gene3D" id="3.40.50.1820">
    <property type="entry name" value="alpha/beta hydrolase"/>
    <property type="match status" value="1"/>
</dbReference>
<dbReference type="Gene3D" id="3.40.366.10">
    <property type="entry name" value="Malonyl-Coenzyme A Acyl Carrier Protein, domain 2"/>
    <property type="match status" value="2"/>
</dbReference>
<dbReference type="Gene3D" id="3.10.129.110">
    <property type="entry name" value="Polyketide synthase dehydratase"/>
    <property type="match status" value="1"/>
</dbReference>
<dbReference type="InterPro" id="IPR029058">
    <property type="entry name" value="AB_hydrolase_fold"/>
</dbReference>
<dbReference type="InterPro" id="IPR001227">
    <property type="entry name" value="Ac_transferase_dom_sf"/>
</dbReference>
<dbReference type="InterPro" id="IPR036736">
    <property type="entry name" value="ACP-like_sf"/>
</dbReference>
<dbReference type="InterPro" id="IPR014043">
    <property type="entry name" value="Acyl_transferase_dom"/>
</dbReference>
<dbReference type="InterPro" id="IPR016035">
    <property type="entry name" value="Acyl_Trfase/lysoPLipase"/>
</dbReference>
<dbReference type="InterPro" id="IPR018201">
    <property type="entry name" value="Ketoacyl_synth_AS"/>
</dbReference>
<dbReference type="InterPro" id="IPR014031">
    <property type="entry name" value="Ketoacyl_synth_C"/>
</dbReference>
<dbReference type="InterPro" id="IPR014030">
    <property type="entry name" value="Ketoacyl_synth_N"/>
</dbReference>
<dbReference type="InterPro" id="IPR016036">
    <property type="entry name" value="Malonyl_transacylase_ACP-bd"/>
</dbReference>
<dbReference type="InterPro" id="IPR020841">
    <property type="entry name" value="PKS_Beta-ketoAc_synthase_dom"/>
</dbReference>
<dbReference type="InterPro" id="IPR042104">
    <property type="entry name" value="PKS_dehydratase_sf"/>
</dbReference>
<dbReference type="InterPro" id="IPR049551">
    <property type="entry name" value="PKS_DH_C"/>
</dbReference>
<dbReference type="InterPro" id="IPR049900">
    <property type="entry name" value="PKS_mFAS_DH"/>
</dbReference>
<dbReference type="InterPro" id="IPR050091">
    <property type="entry name" value="PKS_NRPS_Biosynth_Enz"/>
</dbReference>
<dbReference type="InterPro" id="IPR020806">
    <property type="entry name" value="PKS_PP-bd"/>
</dbReference>
<dbReference type="InterPro" id="IPR009081">
    <property type="entry name" value="PP-bd_ACP"/>
</dbReference>
<dbReference type="InterPro" id="IPR006162">
    <property type="entry name" value="Ppantetheine_attach_site"/>
</dbReference>
<dbReference type="InterPro" id="IPR030918">
    <property type="entry name" value="PT_fungal_PKS"/>
</dbReference>
<dbReference type="InterPro" id="IPR032088">
    <property type="entry name" value="SAT"/>
</dbReference>
<dbReference type="InterPro" id="IPR001031">
    <property type="entry name" value="Thioesterase"/>
</dbReference>
<dbReference type="InterPro" id="IPR016039">
    <property type="entry name" value="Thiolase-like"/>
</dbReference>
<dbReference type="NCBIfam" id="TIGR04532">
    <property type="entry name" value="PT_fungal_PKS"/>
    <property type="match status" value="1"/>
</dbReference>
<dbReference type="PANTHER" id="PTHR43775:SF45">
    <property type="entry name" value="CONIDIAL PIGMENT POLYKETIDE SYNTHASE ALB1"/>
    <property type="match status" value="1"/>
</dbReference>
<dbReference type="PANTHER" id="PTHR43775">
    <property type="entry name" value="FATTY ACID SYNTHASE"/>
    <property type="match status" value="1"/>
</dbReference>
<dbReference type="Pfam" id="PF00698">
    <property type="entry name" value="Acyl_transf_1"/>
    <property type="match status" value="1"/>
</dbReference>
<dbReference type="Pfam" id="PF22621">
    <property type="entry name" value="CurL-like_PKS_C"/>
    <property type="match status" value="1"/>
</dbReference>
<dbReference type="Pfam" id="PF00109">
    <property type="entry name" value="ketoacyl-synt"/>
    <property type="match status" value="1"/>
</dbReference>
<dbReference type="Pfam" id="PF02801">
    <property type="entry name" value="Ketoacyl-synt_C"/>
    <property type="match status" value="1"/>
</dbReference>
<dbReference type="Pfam" id="PF00550">
    <property type="entry name" value="PP-binding"/>
    <property type="match status" value="2"/>
</dbReference>
<dbReference type="Pfam" id="PF14765">
    <property type="entry name" value="PS-DH"/>
    <property type="match status" value="1"/>
</dbReference>
<dbReference type="Pfam" id="PF16073">
    <property type="entry name" value="SAT"/>
    <property type="match status" value="1"/>
</dbReference>
<dbReference type="Pfam" id="PF00975">
    <property type="entry name" value="Thioesterase"/>
    <property type="match status" value="1"/>
</dbReference>
<dbReference type="SMART" id="SM00827">
    <property type="entry name" value="PKS_AT"/>
    <property type="match status" value="1"/>
</dbReference>
<dbReference type="SMART" id="SM00825">
    <property type="entry name" value="PKS_KS"/>
    <property type="match status" value="1"/>
</dbReference>
<dbReference type="SMART" id="SM00823">
    <property type="entry name" value="PKS_PP"/>
    <property type="match status" value="2"/>
</dbReference>
<dbReference type="SUPFAM" id="SSF47336">
    <property type="entry name" value="ACP-like"/>
    <property type="match status" value="2"/>
</dbReference>
<dbReference type="SUPFAM" id="SSF53474">
    <property type="entry name" value="alpha/beta-Hydrolases"/>
    <property type="match status" value="1"/>
</dbReference>
<dbReference type="SUPFAM" id="SSF52151">
    <property type="entry name" value="FabD/lysophospholipase-like"/>
    <property type="match status" value="1"/>
</dbReference>
<dbReference type="SUPFAM" id="SSF55048">
    <property type="entry name" value="Probable ACP-binding domain of malonyl-CoA ACP transacylase"/>
    <property type="match status" value="1"/>
</dbReference>
<dbReference type="SUPFAM" id="SSF53901">
    <property type="entry name" value="Thiolase-like"/>
    <property type="match status" value="1"/>
</dbReference>
<dbReference type="PROSITE" id="PS50075">
    <property type="entry name" value="CARRIER"/>
    <property type="match status" value="2"/>
</dbReference>
<dbReference type="PROSITE" id="PS00606">
    <property type="entry name" value="KS3_1"/>
    <property type="match status" value="1"/>
</dbReference>
<dbReference type="PROSITE" id="PS52004">
    <property type="entry name" value="KS3_2"/>
    <property type="match status" value="1"/>
</dbReference>
<dbReference type="PROSITE" id="PS00012">
    <property type="entry name" value="PHOSPHOPANTETHEINE"/>
    <property type="match status" value="1"/>
</dbReference>
<dbReference type="PROSITE" id="PS52019">
    <property type="entry name" value="PKS_MFAS_DH"/>
    <property type="match status" value="1"/>
</dbReference>
<protein>
    <recommendedName>
        <fullName evidence="10">Polyketide synthase 1</fullName>
        <ecNumber evidence="9">2.3.1.-</ecNumber>
    </recommendedName>
    <alternativeName>
        <fullName evidence="10">Conidial pigment biosynthesis polyketide synthase</fullName>
    </alternativeName>
</protein>
<feature type="chain" id="PRO_0000445743" description="Polyketide synthase 1">
    <location>
        <begin position="1"/>
        <end position="2148"/>
    </location>
</feature>
<feature type="domain" description="Ketosynthase family 3 (KS3)" evidence="5 11">
    <location>
        <begin position="394"/>
        <end position="829"/>
    </location>
</feature>
<feature type="domain" description="PKS/mFAS DH" evidence="6">
    <location>
        <begin position="1314"/>
        <end position="1619"/>
    </location>
</feature>
<feature type="domain" description="Carrier 1" evidence="4 11">
    <location>
        <begin position="1678"/>
        <end position="1752"/>
    </location>
</feature>
<feature type="domain" description="Carrier 2" evidence="4 11">
    <location>
        <begin position="1793"/>
        <end position="1870"/>
    </location>
</feature>
<feature type="region of interest" description="N-terminal acylcarrier protein transacylase domain (SAT)" evidence="3 11">
    <location>
        <begin position="19"/>
        <end position="261"/>
    </location>
</feature>
<feature type="region of interest" description="Malonyl-CoA:ACP transacylase (MAT) domain" evidence="3 11">
    <location>
        <begin position="929"/>
        <end position="1233"/>
    </location>
</feature>
<feature type="region of interest" description="Product template (PT) domain" evidence="3 11">
    <location>
        <begin position="1310"/>
        <end position="1624"/>
    </location>
</feature>
<feature type="region of interest" description="N-terminal hotdog fold" evidence="6">
    <location>
        <begin position="1314"/>
        <end position="1447"/>
    </location>
</feature>
<feature type="region of interest" description="C-terminal hotdog fold" evidence="6">
    <location>
        <begin position="1474"/>
        <end position="1619"/>
    </location>
</feature>
<feature type="region of interest" description="Disordered" evidence="8">
    <location>
        <begin position="1619"/>
        <end position="1655"/>
    </location>
</feature>
<feature type="region of interest" description="Disordered" evidence="8">
    <location>
        <begin position="1755"/>
        <end position="1796"/>
    </location>
</feature>
<feature type="region of interest" description="Thioesterase (TE) domain" evidence="3 11">
    <location>
        <begin position="1882"/>
        <end position="2146"/>
    </location>
</feature>
<feature type="compositionally biased region" description="Low complexity" evidence="8">
    <location>
        <begin position="1755"/>
        <end position="1790"/>
    </location>
</feature>
<feature type="active site" description="For beta-ketoacyl synthase activity" evidence="5">
    <location>
        <position position="566"/>
    </location>
</feature>
<feature type="active site" description="For beta-ketoacyl synthase activity" evidence="5">
    <location>
        <position position="701"/>
    </location>
</feature>
<feature type="active site" description="For beta-ketoacyl synthase activity" evidence="5">
    <location>
        <position position="745"/>
    </location>
</feature>
<feature type="active site" description="For acyl/malonyl transferase activity" evidence="7">
    <location>
        <position position="1018"/>
    </location>
</feature>
<feature type="active site" description="Proton acceptor; for dehydratase activity" evidence="6">
    <location>
        <position position="1346"/>
    </location>
</feature>
<feature type="active site" description="Proton donor; for dehydratase activity" evidence="6">
    <location>
        <position position="1533"/>
    </location>
</feature>
<feature type="active site" description="For thioesterase activity" evidence="2">
    <location>
        <position position="1973"/>
    </location>
</feature>
<feature type="modified residue" description="O-(pantetheine 4'-phosphoryl)serine" evidence="4">
    <location>
        <position position="1712"/>
    </location>
</feature>
<feature type="modified residue" description="O-(pantetheine 4'-phosphoryl)serine" evidence="4">
    <location>
        <position position="1830"/>
    </location>
</feature>
<sequence length="2148" mass="234471">MNHVTIKQSDTRADPFRVFIFGDQSSCNLSNLQLLLFKKSNVYLASFIDQVNLTLRHEVARLTAAERQSFPAFSSVQNLVARALKKDTSVALESTLATIYHLCCFINYFGDGQEAYPTGPTTHVSGLCIGALAAAAVSSSKSLAELVQAGIDAVRVSLKVGLLVARTAALFSHQESNGTSSPPWSYAVPDSQLPLALAEEAIESYQAKTNIPPLSLPYISAKGQNSWTASGPPAIVQHFLETSQFEKTLRLTPLAVHAPYHAPHIFSAIDVQHIIRAVGPVSSFSSKLSFISSSSSRNLATGLKFQDLLYRAVEDILILPLDLREAAENIRLVLEATDNVQQCALFPISTGVGPSLKQSFSPAMASRVSIVDCIMERVAADAGPKSTSGPKPSESKIAIIGMSGRFPESADVEAFWDLLHQGLDVHRPVPPDRFNGELYYDVTGKRKNTCKVMHGCWINDPGLFDAKFFNISPKEAEQSDPGQRLALATAYEALEAAGVVADRTPSTQRDRVGVFYGMTSDDYREVSCGQNVDTYFIPGGNRAFTPGKINYFFKYCGPSVSVDTACSSSLAAIHLACNSIWRNECDTAIAGGTNVMSNPDSFVGLDRGYFLSRTGNCHTFDDEADGYCRADAVGTVILKRLEDAIADHDPILGVISGALTNHSADAVSITRPHSGAQEEIFSKLLTESGVHPHQVSYIEMHGTGTQAGDATEMTSVLNCFAPSTSTRRLPHESLHLGSTKANVGHSESASGVSALIKVLLMMEKNIIPPHCGIKGKINHKFPTDLDERNVHIAKTATQWNRRNELNNIRRAFVNNFSAAGGNTALLVEDYPLLIADSSQPDGRTAHVVTVSAKSIKSLKGNLENLKKFVQKQASTEGFLPKLSYTTTARRMHHPFRVAIPAANSEQLLSALNEELTHDSYTCCSESPVAFVFSGQGSQYSAMGQHLLHFTIFRDEVHAYDILAQRHGFPSIMPLIDGSVDIEDLEPLVVQLGTVCVQMALASLWMALGMRPAYVVGHSLGHYAALKVAGVLTASDTIYLVATRARLLQNKCSRGSHAMLAIRSSAAEIQAHLDEGIHDIACINGPQDTVVSGCIDDIDRLSQKLMDKGIKATRVNVPFAFHSAQVDPILDELEAVASQVEFHAPRVAIGCPLLSKTFKAGETPSLEAKHIRRHCRETVNFLDVLRSAKDDGLVSEKTAWIEIGPHTVCSNLVKANINQDITAVPSLMRNKDGWQVLASSVATLYRQGSSVAWDEYHHDFEACKQVLRLPAYSWDNKLYWIDYVHDWLLTRGDPPVQAAASLPAPPSSFSTASVHRIVHESVEKGKLTLTAECEFTNEQLHEVVYGHLVNGNRVCSSSLYTDFGVTLGSYILEKYRPDLQGHAVDVQDMVVNKALVHKEGPTMLLRIDVVLDTTDSKAASMSIYSVNSKGNKTADHAQSSLHFEQPKVWLKSWDSTQYYVERSIEWLKEKADQGLNSRMSSGVIYKLFSSLVDYSTAYKGMQEAIVNTEDFEATALVRFQVDEGNFRCNPMWVDSCGQLAGFLMNGHAKTPKDQVFINHGWQYFRTVRKFSRDKTYRTYVRMRCVEGTTYAGDVYIFDDDGIVGVCGSITFQGIPRKVLNTAMPPPKSQNEAPVRSGPAKPAVKPPRSASSEHSGHFARHANIEPLKLDAALKSATTARNPMLPVFKIVAEEIGIPSAGVDNGLVFADYGVDSLLSLSISGRLREELDLDVESSAFETCATLADLAAHLGMDTFSADQSSGQSSSSGGLSPRSDSIGEMTSSATTPPSMSPRGSVSGSQCKDVCAILAEEIGVSMGEITNDTDLGALGMDSLMSLAVLSRLREELELDLEGDFFVSHPNFSSFKHMFQQGHGDEAEPETSAELKQYRATSTLLQGSPKSALYTLFLLPDGSGSSFSYAPINAVRKDVCVFGLNCPWLKSAEKLVQFGLKGLATLYVEEIRRRAPHGPYNLGGWSAGGICAYEAAIQFTREGETVERLILLDSPNPIGLEKLPARLFDFVNGLGLFGDGKAPDWLLAHFLAFIDALDEWKPVPWDKALGGSSPPPMTYILWAEDGICKGTDARPEYRDDDPREMKWLLENRTNFGGNNWDVLLGQQSLSIERIQDANHFTMLRKGKNTERVAAFIRSIFG</sequence>
<proteinExistence type="evidence at protein level"/>
<comment type="function">
    <text evidence="1 9">Polyketide synthase; part of the Pks1 gene cluster that mediates the biosynthesis of an anthraquinone derivative pigment that contributes to conidial pigmentation that provides protection from UV radiation, heat and cold stress (PubMed:29958281). The polyketide synthase Pks1 produces 1-acetyl-2,4,6,8-tetrahydroxy-9,10-anthraquinone though condensation of acetyl-CoA with malonyl-CoA (By similarity). The dehydratase EthD and the laccase Mlac1 further convert the anthraquinone derivative into the final conidial pigment (By similarity).</text>
</comment>
<comment type="induction">
    <text evidence="1 9">Highly expressed during conidiation (PubMed:29958281). A conserved conidiation regulatory pathway containing BrlA, AbaA and WetA regulates expression. During conidiation BlrA up-regulates AbaA, which in turn controls WetA. Moreover, the Hog1 MAPK regulates fungal conidiation by controlling the conidiation regulatory pathway, and that all three pigmentation genes Pks1, EthD and Mlac1 exercise feedback regulation of conidiation (By similarity).</text>
</comment>
<comment type="domain">
    <text evidence="11">Multidomain protein; including a starter unit:ACP transacylase (SAT) that selects the starter unit; a ketosynthase (KS) that catalyzes repeated decarboxylative condensation to elongate the polyketide backbone; a malonyl-CoA:ACP transacylase (MAT) that selects and transfers the extender unit malonyl-CoA; a product template (PT) domain that controls the immediate cyclization regioselectivity of the reactive polyketide backbone; and an acyl-carrier protein (ACP) that serves as the tether of the growing and completed polyketide via its phosphopantetheinyl arm.</text>
</comment>
<comment type="domain">
    <text evidence="11">The release of the polyketide chain from the non-reducing polyketide synthase is mediated by the thioesterase (TE) domain localized at the C-ter of the protein.</text>
</comment>
<comment type="disruption phenotype">
    <text evidence="9">Results in red conidia.</text>
</comment>